<gene>
    <name evidence="1" type="primary">murB</name>
    <name type="ordered locus">SSU98_0804</name>
</gene>
<sequence length="302" mass="33135">MKDKIRLELEGIDIRFDEPLKEYTYTKVGGAVDYLAFPRNRYEIVRIVEFAKREGIPWQVLGNSSNIIVRDGGIRGFVIRMDKLNSVTVSGYTIEAEAGANLIETTKVALFHSLSGFEFACGIPGSIGGAVYMNAGAYGGEVAHILVSAQILTPAGYVETLDNRELRFGYRSSILQENGAIVLSAKFALRPGNHTVIQQEMARLTHLRELKQPLEYPSCGSVFKRPLGHFAGQLIMDAGLKGYRIGGVEVSEKHAGFMVNIENGTASDYENLIAHVIQVVEKSSGITLEREVRIIGDPADTL</sequence>
<accession>A4W0S3</accession>
<reference key="1">
    <citation type="journal article" date="2007" name="PLoS ONE">
        <title>A glimpse of streptococcal toxic shock syndrome from comparative genomics of S. suis 2 Chinese isolates.</title>
        <authorList>
            <person name="Chen C."/>
            <person name="Tang J."/>
            <person name="Dong W."/>
            <person name="Wang C."/>
            <person name="Feng Y."/>
            <person name="Wang J."/>
            <person name="Zheng F."/>
            <person name="Pan X."/>
            <person name="Liu D."/>
            <person name="Li M."/>
            <person name="Song Y."/>
            <person name="Zhu X."/>
            <person name="Sun H."/>
            <person name="Feng T."/>
            <person name="Guo Z."/>
            <person name="Ju A."/>
            <person name="Ge J."/>
            <person name="Dong Y."/>
            <person name="Sun W."/>
            <person name="Jiang Y."/>
            <person name="Wang J."/>
            <person name="Yan J."/>
            <person name="Yang H."/>
            <person name="Wang X."/>
            <person name="Gao G.F."/>
            <person name="Yang R."/>
            <person name="Wang J."/>
            <person name="Yu J."/>
        </authorList>
    </citation>
    <scope>NUCLEOTIDE SEQUENCE [LARGE SCALE GENOMIC DNA]</scope>
    <source>
        <strain>98HAH33</strain>
    </source>
</reference>
<protein>
    <recommendedName>
        <fullName evidence="1">UDP-N-acetylenolpyruvoylglucosamine reductase</fullName>
        <ecNumber evidence="1">1.3.1.98</ecNumber>
    </recommendedName>
    <alternativeName>
        <fullName evidence="1">UDP-N-acetylmuramate dehydrogenase</fullName>
    </alternativeName>
</protein>
<comment type="function">
    <text evidence="1">Cell wall formation.</text>
</comment>
<comment type="catalytic activity">
    <reaction evidence="1">
        <text>UDP-N-acetyl-alpha-D-muramate + NADP(+) = UDP-N-acetyl-3-O-(1-carboxyvinyl)-alpha-D-glucosamine + NADPH + H(+)</text>
        <dbReference type="Rhea" id="RHEA:12248"/>
        <dbReference type="ChEBI" id="CHEBI:15378"/>
        <dbReference type="ChEBI" id="CHEBI:57783"/>
        <dbReference type="ChEBI" id="CHEBI:58349"/>
        <dbReference type="ChEBI" id="CHEBI:68483"/>
        <dbReference type="ChEBI" id="CHEBI:70757"/>
        <dbReference type="EC" id="1.3.1.98"/>
    </reaction>
</comment>
<comment type="cofactor">
    <cofactor evidence="1">
        <name>FAD</name>
        <dbReference type="ChEBI" id="CHEBI:57692"/>
    </cofactor>
</comment>
<comment type="pathway">
    <text evidence="1">Cell wall biogenesis; peptidoglycan biosynthesis.</text>
</comment>
<comment type="subcellular location">
    <subcellularLocation>
        <location evidence="1">Cytoplasm</location>
    </subcellularLocation>
</comment>
<comment type="similarity">
    <text evidence="1">Belongs to the MurB family.</text>
</comment>
<proteinExistence type="inferred from homology"/>
<evidence type="ECO:0000255" key="1">
    <source>
        <dbReference type="HAMAP-Rule" id="MF_00037"/>
    </source>
</evidence>
<dbReference type="EC" id="1.3.1.98" evidence="1"/>
<dbReference type="EMBL" id="CP000408">
    <property type="protein sequence ID" value="ABP91962.1"/>
    <property type="molecule type" value="Genomic_DNA"/>
</dbReference>
<dbReference type="SMR" id="A4W0S3"/>
<dbReference type="KEGG" id="ssv:SSU98_0804"/>
<dbReference type="HOGENOM" id="CLU_035304_1_1_9"/>
<dbReference type="UniPathway" id="UPA00219"/>
<dbReference type="GO" id="GO:0005829">
    <property type="term" value="C:cytosol"/>
    <property type="evidence" value="ECO:0007669"/>
    <property type="project" value="TreeGrafter"/>
</dbReference>
<dbReference type="GO" id="GO:0071949">
    <property type="term" value="F:FAD binding"/>
    <property type="evidence" value="ECO:0007669"/>
    <property type="project" value="InterPro"/>
</dbReference>
<dbReference type="GO" id="GO:0008762">
    <property type="term" value="F:UDP-N-acetylmuramate dehydrogenase activity"/>
    <property type="evidence" value="ECO:0007669"/>
    <property type="project" value="UniProtKB-UniRule"/>
</dbReference>
<dbReference type="GO" id="GO:0051301">
    <property type="term" value="P:cell division"/>
    <property type="evidence" value="ECO:0007669"/>
    <property type="project" value="UniProtKB-KW"/>
</dbReference>
<dbReference type="GO" id="GO:0071555">
    <property type="term" value="P:cell wall organization"/>
    <property type="evidence" value="ECO:0007669"/>
    <property type="project" value="UniProtKB-KW"/>
</dbReference>
<dbReference type="GO" id="GO:0009252">
    <property type="term" value="P:peptidoglycan biosynthetic process"/>
    <property type="evidence" value="ECO:0007669"/>
    <property type="project" value="UniProtKB-UniRule"/>
</dbReference>
<dbReference type="GO" id="GO:0008360">
    <property type="term" value="P:regulation of cell shape"/>
    <property type="evidence" value="ECO:0007669"/>
    <property type="project" value="UniProtKB-KW"/>
</dbReference>
<dbReference type="Gene3D" id="3.30.465.10">
    <property type="match status" value="1"/>
</dbReference>
<dbReference type="Gene3D" id="3.90.78.10">
    <property type="entry name" value="UDP-N-acetylenolpyruvoylglucosamine reductase, C-terminal domain"/>
    <property type="match status" value="1"/>
</dbReference>
<dbReference type="Gene3D" id="3.30.43.10">
    <property type="entry name" value="Uridine Diphospho-n-acetylenolpyruvylglucosamine Reductase, domain 2"/>
    <property type="match status" value="1"/>
</dbReference>
<dbReference type="HAMAP" id="MF_00037">
    <property type="entry name" value="MurB"/>
    <property type="match status" value="1"/>
</dbReference>
<dbReference type="InterPro" id="IPR016166">
    <property type="entry name" value="FAD-bd_PCMH"/>
</dbReference>
<dbReference type="InterPro" id="IPR036318">
    <property type="entry name" value="FAD-bd_PCMH-like_sf"/>
</dbReference>
<dbReference type="InterPro" id="IPR016167">
    <property type="entry name" value="FAD-bd_PCMH_sub1"/>
</dbReference>
<dbReference type="InterPro" id="IPR016169">
    <property type="entry name" value="FAD-bd_PCMH_sub2"/>
</dbReference>
<dbReference type="InterPro" id="IPR003170">
    <property type="entry name" value="MurB"/>
</dbReference>
<dbReference type="InterPro" id="IPR011601">
    <property type="entry name" value="MurB_C"/>
</dbReference>
<dbReference type="InterPro" id="IPR036635">
    <property type="entry name" value="MurB_C_sf"/>
</dbReference>
<dbReference type="InterPro" id="IPR006094">
    <property type="entry name" value="Oxid_FAD_bind_N"/>
</dbReference>
<dbReference type="NCBIfam" id="TIGR00179">
    <property type="entry name" value="murB"/>
    <property type="match status" value="1"/>
</dbReference>
<dbReference type="NCBIfam" id="NF010480">
    <property type="entry name" value="PRK13905.1"/>
    <property type="match status" value="1"/>
</dbReference>
<dbReference type="PANTHER" id="PTHR21071">
    <property type="entry name" value="UDP-N-ACETYLENOLPYRUVOYLGLUCOSAMINE REDUCTASE"/>
    <property type="match status" value="1"/>
</dbReference>
<dbReference type="PANTHER" id="PTHR21071:SF4">
    <property type="entry name" value="UDP-N-ACETYLENOLPYRUVOYLGLUCOSAMINE REDUCTASE"/>
    <property type="match status" value="1"/>
</dbReference>
<dbReference type="Pfam" id="PF01565">
    <property type="entry name" value="FAD_binding_4"/>
    <property type="match status" value="1"/>
</dbReference>
<dbReference type="Pfam" id="PF02873">
    <property type="entry name" value="MurB_C"/>
    <property type="match status" value="1"/>
</dbReference>
<dbReference type="SUPFAM" id="SSF56176">
    <property type="entry name" value="FAD-binding/transporter-associated domain-like"/>
    <property type="match status" value="1"/>
</dbReference>
<dbReference type="SUPFAM" id="SSF56194">
    <property type="entry name" value="Uridine diphospho-N-Acetylenolpyruvylglucosamine reductase, MurB, C-terminal domain"/>
    <property type="match status" value="1"/>
</dbReference>
<dbReference type="PROSITE" id="PS51387">
    <property type="entry name" value="FAD_PCMH"/>
    <property type="match status" value="1"/>
</dbReference>
<organism>
    <name type="scientific">Streptococcus suis (strain 98HAH33)</name>
    <dbReference type="NCBI Taxonomy" id="391296"/>
    <lineage>
        <taxon>Bacteria</taxon>
        <taxon>Bacillati</taxon>
        <taxon>Bacillota</taxon>
        <taxon>Bacilli</taxon>
        <taxon>Lactobacillales</taxon>
        <taxon>Streptococcaceae</taxon>
        <taxon>Streptococcus</taxon>
    </lineage>
</organism>
<feature type="chain" id="PRO_0000332509" description="UDP-N-acetylenolpyruvoylglucosamine reductase">
    <location>
        <begin position="1"/>
        <end position="302"/>
    </location>
</feature>
<feature type="domain" description="FAD-binding PCMH-type" evidence="1">
    <location>
        <begin position="27"/>
        <end position="192"/>
    </location>
</feature>
<feature type="active site" evidence="1">
    <location>
        <position position="171"/>
    </location>
</feature>
<feature type="active site" description="Proton donor" evidence="1">
    <location>
        <position position="221"/>
    </location>
</feature>
<feature type="active site" evidence="1">
    <location>
        <position position="291"/>
    </location>
</feature>
<name>MURB_STRS2</name>
<keyword id="KW-0131">Cell cycle</keyword>
<keyword id="KW-0132">Cell division</keyword>
<keyword id="KW-0133">Cell shape</keyword>
<keyword id="KW-0961">Cell wall biogenesis/degradation</keyword>
<keyword id="KW-0963">Cytoplasm</keyword>
<keyword id="KW-0274">FAD</keyword>
<keyword id="KW-0285">Flavoprotein</keyword>
<keyword id="KW-0521">NADP</keyword>
<keyword id="KW-0560">Oxidoreductase</keyword>
<keyword id="KW-0573">Peptidoglycan synthesis</keyword>